<sequence>MHGRKDDAQKQPVKNQLGLNPQSHLPELQLFQAEGKIYKYDHMEKSVNSSSLVSPPQRISSTVKTHISHTYECNFVDSLFTQKEKANIGTEHYKCSERGKAFHQGLHFTIHQIIHTKETQFKCDICGKIFNKKSNLASHQRIHTGEKPYKCNECGKVFHNMSHLAQHRRIHTGEKPYKCNECGKVFNQISHLAQHQRIHTGEKPYKCNECGKVFHQISHLAQHRTIHTGEKPYECNKCGKVFSRNSYLVQHLIIHTGEKPYRCNVCGKVFHHISHLAQHQRIHTGEKPYKCNECGKVFSHKSSLVNHWRIHTGEKPYKCNECGKVFSHKSSLVNHWRIHTGEKPYKCNECGKVFSRNSYLAQHLIIHAGEKPYKCDECDKAFSQNSHLVQHHRIHTGEKPYKCDECGKVFSQNSYLAYHWRIHTGEKAYKCNECGKVFGLNSSLAHHRKIHTGEKPFKCNECGKAFSMRSSLTNHHAIHTGEKHFKCNECGKLFRDNSYLVRHQRFHAGKKSNTCN</sequence>
<feature type="chain" id="PRO_0000047396" description="Zinc finger protein 83">
    <location>
        <begin position="1"/>
        <end position="516"/>
    </location>
</feature>
<feature type="zinc finger region" description="C2H2-type 1; degenerate" evidence="1">
    <location>
        <begin position="93"/>
        <end position="115"/>
    </location>
</feature>
<feature type="zinc finger region" description="C2H2-type 2" evidence="1">
    <location>
        <begin position="121"/>
        <end position="143"/>
    </location>
</feature>
<feature type="zinc finger region" description="C2H2-type 3" evidence="1">
    <location>
        <begin position="149"/>
        <end position="171"/>
    </location>
</feature>
<feature type="zinc finger region" description="C2H2-type 4" evidence="1">
    <location>
        <begin position="177"/>
        <end position="199"/>
    </location>
</feature>
<feature type="zinc finger region" description="C2H2-type 5" evidence="1">
    <location>
        <begin position="205"/>
        <end position="227"/>
    </location>
</feature>
<feature type="zinc finger region" description="C2H2-type 6" evidence="1">
    <location>
        <begin position="233"/>
        <end position="255"/>
    </location>
</feature>
<feature type="zinc finger region" description="C2H2-type 7" evidence="1">
    <location>
        <begin position="261"/>
        <end position="283"/>
    </location>
</feature>
<feature type="zinc finger region" description="C2H2-type 8" evidence="1">
    <location>
        <begin position="289"/>
        <end position="311"/>
    </location>
</feature>
<feature type="zinc finger region" description="C2H2-type 9" evidence="1">
    <location>
        <begin position="317"/>
        <end position="339"/>
    </location>
</feature>
<feature type="zinc finger region" description="C2H2-type 10" evidence="1">
    <location>
        <begin position="345"/>
        <end position="367"/>
    </location>
</feature>
<feature type="zinc finger region" description="C2H2-type 11" evidence="1">
    <location>
        <begin position="373"/>
        <end position="395"/>
    </location>
</feature>
<feature type="zinc finger region" description="C2H2-type 12" evidence="1">
    <location>
        <begin position="401"/>
        <end position="423"/>
    </location>
</feature>
<feature type="zinc finger region" description="C2H2-type 13" evidence="1">
    <location>
        <begin position="429"/>
        <end position="451"/>
    </location>
</feature>
<feature type="zinc finger region" description="C2H2-type 14" evidence="1">
    <location>
        <begin position="457"/>
        <end position="479"/>
    </location>
</feature>
<feature type="zinc finger region" description="C2H2-type 15" evidence="1">
    <location>
        <begin position="485"/>
        <end position="507"/>
    </location>
</feature>
<feature type="region of interest" description="Disordered" evidence="2">
    <location>
        <begin position="1"/>
        <end position="20"/>
    </location>
</feature>
<feature type="splice variant" id="VSP_037663" description="In isoform 2." evidence="6 7">
    <location>
        <begin position="271"/>
        <end position="298"/>
    </location>
</feature>
<feature type="sequence variant" id="VAR_058206" description="In dbSNP:rs3786490.">
    <original>T</original>
    <variation>I</variation>
    <location>
        <position position="70"/>
    </location>
</feature>
<feature type="sequence variant" id="VAR_058207" description="In dbSNP:rs1056185." evidence="3 4 5">
    <original>S</original>
    <variation>N</variation>
    <location>
        <position position="96"/>
    </location>
</feature>
<feature type="sequence variant" id="VAR_058208" description="In dbSNP:rs329940.">
    <original>T</original>
    <variation>M</variation>
    <location>
        <position position="119"/>
    </location>
</feature>
<feature type="sequence variant" id="VAR_058209" description="In dbSNP:rs11545619." evidence="4">
    <original>H</original>
    <variation>R</variation>
    <location>
        <position position="392"/>
    </location>
</feature>
<feature type="sequence conflict" description="In Ref. 4; AAG41760." evidence="8" ref="4">
    <original>GTE</original>
    <variation>MDR</variation>
    <location>
        <begin position="89"/>
        <end position="91"/>
    </location>
</feature>
<feature type="sequence conflict" description="In Ref. 4; AAG41760." evidence="8" ref="4">
    <original>FT</original>
    <variation>LP</variation>
    <location>
        <begin position="108"/>
        <end position="109"/>
    </location>
</feature>
<accession>P51522</accession>
<accession>A8MT75</accession>
<accession>Q3ZCX0</accession>
<accession>Q6PI08</accession>
<name>ZNF83_HUMAN</name>
<protein>
    <recommendedName>
        <fullName>Zinc finger protein 83</fullName>
    </recommendedName>
    <alternativeName>
        <fullName>Zinc finger protein 816B</fullName>
    </alternativeName>
    <alternativeName>
        <fullName>Zinc finger protein HPF1</fullName>
    </alternativeName>
</protein>
<organism>
    <name type="scientific">Homo sapiens</name>
    <name type="common">Human</name>
    <dbReference type="NCBI Taxonomy" id="9606"/>
    <lineage>
        <taxon>Eukaryota</taxon>
        <taxon>Metazoa</taxon>
        <taxon>Chordata</taxon>
        <taxon>Craniata</taxon>
        <taxon>Vertebrata</taxon>
        <taxon>Euteleostomi</taxon>
        <taxon>Mammalia</taxon>
        <taxon>Eutheria</taxon>
        <taxon>Euarchontoglires</taxon>
        <taxon>Primates</taxon>
        <taxon>Haplorrhini</taxon>
        <taxon>Catarrhini</taxon>
        <taxon>Hominidae</taxon>
        <taxon>Homo</taxon>
    </lineage>
</organism>
<keyword id="KW-0025">Alternative splicing</keyword>
<keyword id="KW-0238">DNA-binding</keyword>
<keyword id="KW-0479">Metal-binding</keyword>
<keyword id="KW-0539">Nucleus</keyword>
<keyword id="KW-1267">Proteomics identification</keyword>
<keyword id="KW-1185">Reference proteome</keyword>
<keyword id="KW-0677">Repeat</keyword>
<keyword id="KW-0804">Transcription</keyword>
<keyword id="KW-0805">Transcription regulation</keyword>
<keyword id="KW-0862">Zinc</keyword>
<keyword id="KW-0863">Zinc-finger</keyword>
<gene>
    <name type="primary">ZNF83</name>
    <name type="synonym">ZNF816B</name>
</gene>
<reference key="1">
    <citation type="journal article" date="2004" name="Nat. Genet.">
        <title>Complete sequencing and characterization of 21,243 full-length human cDNAs.</title>
        <authorList>
            <person name="Ota T."/>
            <person name="Suzuki Y."/>
            <person name="Nishikawa T."/>
            <person name="Otsuki T."/>
            <person name="Sugiyama T."/>
            <person name="Irie R."/>
            <person name="Wakamatsu A."/>
            <person name="Hayashi K."/>
            <person name="Sato H."/>
            <person name="Nagai K."/>
            <person name="Kimura K."/>
            <person name="Makita H."/>
            <person name="Sekine M."/>
            <person name="Obayashi M."/>
            <person name="Nishi T."/>
            <person name="Shibahara T."/>
            <person name="Tanaka T."/>
            <person name="Ishii S."/>
            <person name="Yamamoto J."/>
            <person name="Saito K."/>
            <person name="Kawai Y."/>
            <person name="Isono Y."/>
            <person name="Nakamura Y."/>
            <person name="Nagahari K."/>
            <person name="Murakami K."/>
            <person name="Yasuda T."/>
            <person name="Iwayanagi T."/>
            <person name="Wagatsuma M."/>
            <person name="Shiratori A."/>
            <person name="Sudo H."/>
            <person name="Hosoiri T."/>
            <person name="Kaku Y."/>
            <person name="Kodaira H."/>
            <person name="Kondo H."/>
            <person name="Sugawara M."/>
            <person name="Takahashi M."/>
            <person name="Kanda K."/>
            <person name="Yokoi T."/>
            <person name="Furuya T."/>
            <person name="Kikkawa E."/>
            <person name="Omura Y."/>
            <person name="Abe K."/>
            <person name="Kamihara K."/>
            <person name="Katsuta N."/>
            <person name="Sato K."/>
            <person name="Tanikawa M."/>
            <person name="Yamazaki M."/>
            <person name="Ninomiya K."/>
            <person name="Ishibashi T."/>
            <person name="Yamashita H."/>
            <person name="Murakawa K."/>
            <person name="Fujimori K."/>
            <person name="Tanai H."/>
            <person name="Kimata M."/>
            <person name="Watanabe M."/>
            <person name="Hiraoka S."/>
            <person name="Chiba Y."/>
            <person name="Ishida S."/>
            <person name="Ono Y."/>
            <person name="Takiguchi S."/>
            <person name="Watanabe S."/>
            <person name="Yosida M."/>
            <person name="Hotuta T."/>
            <person name="Kusano J."/>
            <person name="Kanehori K."/>
            <person name="Takahashi-Fujii A."/>
            <person name="Hara H."/>
            <person name="Tanase T.-O."/>
            <person name="Nomura Y."/>
            <person name="Togiya S."/>
            <person name="Komai F."/>
            <person name="Hara R."/>
            <person name="Takeuchi K."/>
            <person name="Arita M."/>
            <person name="Imose N."/>
            <person name="Musashino K."/>
            <person name="Yuuki H."/>
            <person name="Oshima A."/>
            <person name="Sasaki N."/>
            <person name="Aotsuka S."/>
            <person name="Yoshikawa Y."/>
            <person name="Matsunawa H."/>
            <person name="Ichihara T."/>
            <person name="Shiohata N."/>
            <person name="Sano S."/>
            <person name="Moriya S."/>
            <person name="Momiyama H."/>
            <person name="Satoh N."/>
            <person name="Takami S."/>
            <person name="Terashima Y."/>
            <person name="Suzuki O."/>
            <person name="Nakagawa S."/>
            <person name="Senoh A."/>
            <person name="Mizoguchi H."/>
            <person name="Goto Y."/>
            <person name="Shimizu F."/>
            <person name="Wakebe H."/>
            <person name="Hishigaki H."/>
            <person name="Watanabe T."/>
            <person name="Sugiyama A."/>
            <person name="Takemoto M."/>
            <person name="Kawakami B."/>
            <person name="Yamazaki M."/>
            <person name="Watanabe K."/>
            <person name="Kumagai A."/>
            <person name="Itakura S."/>
            <person name="Fukuzumi Y."/>
            <person name="Fujimori Y."/>
            <person name="Komiyama M."/>
            <person name="Tashiro H."/>
            <person name="Tanigami A."/>
            <person name="Fujiwara T."/>
            <person name="Ono T."/>
            <person name="Yamada K."/>
            <person name="Fujii Y."/>
            <person name="Ozaki K."/>
            <person name="Hirao M."/>
            <person name="Ohmori Y."/>
            <person name="Kawabata A."/>
            <person name="Hikiji T."/>
            <person name="Kobatake N."/>
            <person name="Inagaki H."/>
            <person name="Ikema Y."/>
            <person name="Okamoto S."/>
            <person name="Okitani R."/>
            <person name="Kawakami T."/>
            <person name="Noguchi S."/>
            <person name="Itoh T."/>
            <person name="Shigeta K."/>
            <person name="Senba T."/>
            <person name="Matsumura K."/>
            <person name="Nakajima Y."/>
            <person name="Mizuno T."/>
            <person name="Morinaga M."/>
            <person name="Sasaki M."/>
            <person name="Togashi T."/>
            <person name="Oyama M."/>
            <person name="Hata H."/>
            <person name="Watanabe M."/>
            <person name="Komatsu T."/>
            <person name="Mizushima-Sugano J."/>
            <person name="Satoh T."/>
            <person name="Shirai Y."/>
            <person name="Takahashi Y."/>
            <person name="Nakagawa K."/>
            <person name="Okumura K."/>
            <person name="Nagase T."/>
            <person name="Nomura N."/>
            <person name="Kikuchi H."/>
            <person name="Masuho Y."/>
            <person name="Yamashita R."/>
            <person name="Nakai K."/>
            <person name="Yada T."/>
            <person name="Nakamura Y."/>
            <person name="Ohara O."/>
            <person name="Isogai T."/>
            <person name="Sugano S."/>
        </authorList>
    </citation>
    <scope>NUCLEOTIDE SEQUENCE [LARGE SCALE MRNA] (ISOFORM 2)</scope>
    <scope>VARIANT ASN-96</scope>
</reference>
<reference key="2">
    <citation type="journal article" date="2004" name="Nature">
        <title>The DNA sequence and biology of human chromosome 19.</title>
        <authorList>
            <person name="Grimwood J."/>
            <person name="Gordon L.A."/>
            <person name="Olsen A.S."/>
            <person name="Terry A."/>
            <person name="Schmutz J."/>
            <person name="Lamerdin J.E."/>
            <person name="Hellsten U."/>
            <person name="Goodstein D."/>
            <person name="Couronne O."/>
            <person name="Tran-Gyamfi M."/>
            <person name="Aerts A."/>
            <person name="Altherr M."/>
            <person name="Ashworth L."/>
            <person name="Bajorek E."/>
            <person name="Black S."/>
            <person name="Branscomb E."/>
            <person name="Caenepeel S."/>
            <person name="Carrano A.V."/>
            <person name="Caoile C."/>
            <person name="Chan Y.M."/>
            <person name="Christensen M."/>
            <person name="Cleland C.A."/>
            <person name="Copeland A."/>
            <person name="Dalin E."/>
            <person name="Dehal P."/>
            <person name="Denys M."/>
            <person name="Detter J.C."/>
            <person name="Escobar J."/>
            <person name="Flowers D."/>
            <person name="Fotopulos D."/>
            <person name="Garcia C."/>
            <person name="Georgescu A.M."/>
            <person name="Glavina T."/>
            <person name="Gomez M."/>
            <person name="Gonzales E."/>
            <person name="Groza M."/>
            <person name="Hammon N."/>
            <person name="Hawkins T."/>
            <person name="Haydu L."/>
            <person name="Ho I."/>
            <person name="Huang W."/>
            <person name="Israni S."/>
            <person name="Jett J."/>
            <person name="Kadner K."/>
            <person name="Kimball H."/>
            <person name="Kobayashi A."/>
            <person name="Larionov V."/>
            <person name="Leem S.-H."/>
            <person name="Lopez F."/>
            <person name="Lou Y."/>
            <person name="Lowry S."/>
            <person name="Malfatti S."/>
            <person name="Martinez D."/>
            <person name="McCready P.M."/>
            <person name="Medina C."/>
            <person name="Morgan J."/>
            <person name="Nelson K."/>
            <person name="Nolan M."/>
            <person name="Ovcharenko I."/>
            <person name="Pitluck S."/>
            <person name="Pollard M."/>
            <person name="Popkie A.P."/>
            <person name="Predki P."/>
            <person name="Quan G."/>
            <person name="Ramirez L."/>
            <person name="Rash S."/>
            <person name="Retterer J."/>
            <person name="Rodriguez A."/>
            <person name="Rogers S."/>
            <person name="Salamov A."/>
            <person name="Salazar A."/>
            <person name="She X."/>
            <person name="Smith D."/>
            <person name="Slezak T."/>
            <person name="Solovyev V."/>
            <person name="Thayer N."/>
            <person name="Tice H."/>
            <person name="Tsai M."/>
            <person name="Ustaszewska A."/>
            <person name="Vo N."/>
            <person name="Wagner M."/>
            <person name="Wheeler J."/>
            <person name="Wu K."/>
            <person name="Xie G."/>
            <person name="Yang J."/>
            <person name="Dubchak I."/>
            <person name="Furey T.S."/>
            <person name="DeJong P."/>
            <person name="Dickson M."/>
            <person name="Gordon D."/>
            <person name="Eichler E.E."/>
            <person name="Pennacchio L.A."/>
            <person name="Richardson P."/>
            <person name="Stubbs L."/>
            <person name="Rokhsar D.S."/>
            <person name="Myers R.M."/>
            <person name="Rubin E.M."/>
            <person name="Lucas S.M."/>
        </authorList>
    </citation>
    <scope>NUCLEOTIDE SEQUENCE [LARGE SCALE GENOMIC DNA]</scope>
</reference>
<reference key="3">
    <citation type="journal article" date="2004" name="Genome Res.">
        <title>The status, quality, and expansion of the NIH full-length cDNA project: the Mammalian Gene Collection (MGC).</title>
        <authorList>
            <consortium name="The MGC Project Team"/>
        </authorList>
    </citation>
    <scope>NUCLEOTIDE SEQUENCE [LARGE SCALE MRNA] (ISOFORMS 1 AND 2)</scope>
    <scope>VARIANTS ASN-96 AND ARG-392</scope>
    <source>
        <tissue>PNS</tissue>
    </source>
</reference>
<reference key="4">
    <citation type="journal article" date="1989" name="DNA">
        <title>The human genome contains hundreds of genes coding for finger proteins of the Kruppel type.</title>
        <authorList>
            <person name="Bellefroid E.J."/>
            <person name="Lecocq P.J."/>
            <person name="Benhida A."/>
            <person name="Poncelet D.A."/>
            <person name="Belayew A."/>
            <person name="Martial J.A."/>
        </authorList>
    </citation>
    <scope>NUCLEOTIDE SEQUENCE [MRNA] OF 89-428 (ISOFORM 1)</scope>
    <scope>VARIANT ASN-96</scope>
    <source>
        <tissue>Placenta</tissue>
    </source>
</reference>
<comment type="function">
    <text>May be involved in transcriptional regulation.</text>
</comment>
<comment type="subcellular location">
    <subcellularLocation>
        <location evidence="8">Nucleus</location>
    </subcellularLocation>
</comment>
<comment type="alternative products">
    <event type="alternative splicing"/>
    <isoform>
        <id>P51522-1</id>
        <name>1</name>
        <sequence type="displayed"/>
    </isoform>
    <isoform>
        <id>P51522-2</id>
        <name>2</name>
        <sequence type="described" ref="VSP_037663"/>
    </isoform>
</comment>
<comment type="similarity">
    <text evidence="8">Belongs to the krueppel C2H2-type zinc-finger protein family.</text>
</comment>
<evidence type="ECO:0000255" key="1">
    <source>
        <dbReference type="PROSITE-ProRule" id="PRU00042"/>
    </source>
</evidence>
<evidence type="ECO:0000256" key="2">
    <source>
        <dbReference type="SAM" id="MobiDB-lite"/>
    </source>
</evidence>
<evidence type="ECO:0000269" key="3">
    <source>
    </source>
</evidence>
<evidence type="ECO:0000269" key="4">
    <source>
    </source>
</evidence>
<evidence type="ECO:0000269" key="5">
    <source>
    </source>
</evidence>
<evidence type="ECO:0000303" key="6">
    <source>
    </source>
</evidence>
<evidence type="ECO:0000303" key="7">
    <source>
    </source>
</evidence>
<evidence type="ECO:0000305" key="8"/>
<dbReference type="EMBL" id="AK289399">
    <property type="protein sequence ID" value="BAF82088.1"/>
    <property type="molecule type" value="mRNA"/>
</dbReference>
<dbReference type="EMBL" id="AC022150">
    <property type="status" value="NOT_ANNOTATED_CDS"/>
    <property type="molecule type" value="Genomic_DNA"/>
</dbReference>
<dbReference type="EMBL" id="BC050407">
    <property type="protein sequence ID" value="AAH50407.1"/>
    <property type="molecule type" value="mRNA"/>
</dbReference>
<dbReference type="EMBL" id="BC032867">
    <property type="protein sequence ID" value="AAH32867.1"/>
    <property type="molecule type" value="mRNA"/>
</dbReference>
<dbReference type="EMBL" id="M27877">
    <property type="protein sequence ID" value="AAG41760.1"/>
    <property type="molecule type" value="mRNA"/>
</dbReference>
<dbReference type="CCDS" id="CCDS12854.1">
    <molecule id="P51522-1"/>
</dbReference>
<dbReference type="PIR" id="A32891">
    <property type="entry name" value="A32891"/>
</dbReference>
<dbReference type="RefSeq" id="NP_001099019.1">
    <molecule id="P51522-1"/>
    <property type="nucleotide sequence ID" value="NM_001105549.2"/>
</dbReference>
<dbReference type="RefSeq" id="NP_001099020.1">
    <molecule id="P51522-1"/>
    <property type="nucleotide sequence ID" value="NM_001105550.2"/>
</dbReference>
<dbReference type="RefSeq" id="NP_001099021.1">
    <molecule id="P51522-1"/>
    <property type="nucleotide sequence ID" value="NM_001105551.2"/>
</dbReference>
<dbReference type="RefSeq" id="NP_001099022.1">
    <molecule id="P51522-1"/>
    <property type="nucleotide sequence ID" value="NM_001105552.2"/>
</dbReference>
<dbReference type="RefSeq" id="NP_001264874.1">
    <molecule id="P51522-1"/>
    <property type="nucleotide sequence ID" value="NM_001277945.2"/>
</dbReference>
<dbReference type="RefSeq" id="NP_001264875.1">
    <molecule id="P51522-1"/>
    <property type="nucleotide sequence ID" value="NM_001277946.2"/>
</dbReference>
<dbReference type="RefSeq" id="NP_001264876.1">
    <molecule id="P51522-1"/>
    <property type="nucleotide sequence ID" value="NM_001277947.2"/>
</dbReference>
<dbReference type="RefSeq" id="NP_001264877.1">
    <molecule id="P51522-1"/>
    <property type="nucleotide sequence ID" value="NM_001277948.2"/>
</dbReference>
<dbReference type="RefSeq" id="NP_001264878.1">
    <molecule id="P51522-1"/>
    <property type="nucleotide sequence ID" value="NM_001277949.2"/>
</dbReference>
<dbReference type="RefSeq" id="NP_001264880.1">
    <molecule id="P51522-1"/>
    <property type="nucleotide sequence ID" value="NM_001277951.2"/>
</dbReference>
<dbReference type="RefSeq" id="NP_001264881.1">
    <molecule id="P51522-1"/>
    <property type="nucleotide sequence ID" value="NM_001277952.2"/>
</dbReference>
<dbReference type="RefSeq" id="NP_001334944.1">
    <molecule id="P51522-1"/>
    <property type="nucleotide sequence ID" value="NM_001348015.2"/>
</dbReference>
<dbReference type="RefSeq" id="NP_001334945.1">
    <molecule id="P51522-1"/>
    <property type="nucleotide sequence ID" value="NM_001348016.2"/>
</dbReference>
<dbReference type="RefSeq" id="NP_001334946.1">
    <molecule id="P51522-1"/>
    <property type="nucleotide sequence ID" value="NM_001348017.2"/>
</dbReference>
<dbReference type="RefSeq" id="NP_001334947.1">
    <molecule id="P51522-1"/>
    <property type="nucleotide sequence ID" value="NM_001348018.2"/>
</dbReference>
<dbReference type="RefSeq" id="NP_001334948.1">
    <molecule id="P51522-1"/>
    <property type="nucleotide sequence ID" value="NM_001348019.2"/>
</dbReference>
<dbReference type="RefSeq" id="NP_060770.3">
    <molecule id="P51522-1"/>
    <property type="nucleotide sequence ID" value="NM_018300.3"/>
</dbReference>
<dbReference type="SMR" id="P51522"/>
<dbReference type="BioGRID" id="120886">
    <property type="interactions" value="12"/>
</dbReference>
<dbReference type="FunCoup" id="P51522">
    <property type="interactions" value="31"/>
</dbReference>
<dbReference type="IntAct" id="P51522">
    <property type="interactions" value="6"/>
</dbReference>
<dbReference type="MINT" id="P51522"/>
<dbReference type="STRING" id="9606.ENSP00000472619"/>
<dbReference type="GlyGen" id="P51522">
    <property type="glycosylation" value="1 site, 1 O-linked glycan (1 site)"/>
</dbReference>
<dbReference type="iPTMnet" id="P51522"/>
<dbReference type="PhosphoSitePlus" id="P51522"/>
<dbReference type="BioMuta" id="ZNF83"/>
<dbReference type="DMDM" id="300669707"/>
<dbReference type="jPOST" id="P51522"/>
<dbReference type="MassIVE" id="P51522"/>
<dbReference type="PaxDb" id="9606-ENSP00000472619"/>
<dbReference type="PeptideAtlas" id="P51522"/>
<dbReference type="Antibodypedia" id="19113">
    <property type="antibodies" value="117 antibodies from 16 providers"/>
</dbReference>
<dbReference type="DNASU" id="55769"/>
<dbReference type="Ensembl" id="ENST00000301096.8">
    <molecule id="P51522-1"/>
    <property type="protein sequence ID" value="ENSP00000301096.3"/>
    <property type="gene ID" value="ENSG00000167766.22"/>
</dbReference>
<dbReference type="Ensembl" id="ENST00000536937.7">
    <molecule id="P51522-1"/>
    <property type="protein sequence ID" value="ENSP00000445993.3"/>
    <property type="gene ID" value="ENSG00000167766.22"/>
</dbReference>
<dbReference type="Ensembl" id="ENST00000545872.1">
    <molecule id="P51522-1"/>
    <property type="protein sequence ID" value="ENSP00000440713.1"/>
    <property type="gene ID" value="ENSG00000167766.22"/>
</dbReference>
<dbReference type="Ensembl" id="ENST00000597161.7">
    <molecule id="P51522-1"/>
    <property type="protein sequence ID" value="ENSP00000473096.2"/>
    <property type="gene ID" value="ENSG00000167766.22"/>
</dbReference>
<dbReference type="Ensembl" id="ENST00000597597.1">
    <molecule id="P51522-1"/>
    <property type="protein sequence ID" value="ENSP00000472619.1"/>
    <property type="gene ID" value="ENSG00000167766.22"/>
</dbReference>
<dbReference type="Ensembl" id="ENST00000706199.2">
    <molecule id="P51522-1"/>
    <property type="protein sequence ID" value="ENSP00000516274.2"/>
    <property type="gene ID" value="ENSG00000167766.22"/>
</dbReference>
<dbReference type="GeneID" id="55769"/>
<dbReference type="KEGG" id="hsa:55769"/>
<dbReference type="MANE-Select" id="ENST00000301096.8">
    <property type="protein sequence ID" value="ENSP00000301096.3"/>
    <property type="RefSeq nucleotide sequence ID" value="NM_018300.4"/>
    <property type="RefSeq protein sequence ID" value="NP_060770.3"/>
</dbReference>
<dbReference type="UCSC" id="uc002pzu.5">
    <molecule id="P51522-1"/>
    <property type="organism name" value="human"/>
</dbReference>
<dbReference type="AGR" id="HGNC:13158"/>
<dbReference type="CTD" id="55769"/>
<dbReference type="DisGeNET" id="55769"/>
<dbReference type="GeneCards" id="ZNF83"/>
<dbReference type="HGNC" id="HGNC:13158">
    <property type="gene designation" value="ZNF83"/>
</dbReference>
<dbReference type="HPA" id="ENSG00000167766">
    <property type="expression patterns" value="Low tissue specificity"/>
</dbReference>
<dbReference type="MIM" id="194558">
    <property type="type" value="gene"/>
</dbReference>
<dbReference type="neXtProt" id="NX_P51522"/>
<dbReference type="OpenTargets" id="ENSG00000167766"/>
<dbReference type="PharmGKB" id="PA37731"/>
<dbReference type="VEuPathDB" id="HostDB:ENSG00000167766"/>
<dbReference type="eggNOG" id="KOG1721">
    <property type="taxonomic scope" value="Eukaryota"/>
</dbReference>
<dbReference type="GeneTree" id="ENSGT00940000163013"/>
<dbReference type="HOGENOM" id="CLU_002678_44_4_1"/>
<dbReference type="InParanoid" id="P51522"/>
<dbReference type="OMA" id="SHTHEYN"/>
<dbReference type="OrthoDB" id="9411774at2759"/>
<dbReference type="PAN-GO" id="P51522">
    <property type="GO annotations" value="3 GO annotations based on evolutionary models"/>
</dbReference>
<dbReference type="PhylomeDB" id="P51522"/>
<dbReference type="TreeFam" id="TF341892"/>
<dbReference type="PathwayCommons" id="P51522"/>
<dbReference type="SignaLink" id="P51522"/>
<dbReference type="BioGRID-ORCS" id="55769">
    <property type="hits" value="29 hits in 1174 CRISPR screens"/>
</dbReference>
<dbReference type="ChiTaRS" id="ZNF83">
    <property type="organism name" value="human"/>
</dbReference>
<dbReference type="GeneWiki" id="ZNF83"/>
<dbReference type="GenomeRNAi" id="55769"/>
<dbReference type="Pharos" id="P51522">
    <property type="development level" value="Tdark"/>
</dbReference>
<dbReference type="PRO" id="PR:P51522"/>
<dbReference type="Proteomes" id="UP000005640">
    <property type="component" value="Chromosome 19"/>
</dbReference>
<dbReference type="RNAct" id="P51522">
    <property type="molecule type" value="protein"/>
</dbReference>
<dbReference type="Bgee" id="ENSG00000167766">
    <property type="expression patterns" value="Expressed in right uterine tube and 196 other cell types or tissues"/>
</dbReference>
<dbReference type="ExpressionAtlas" id="P51522">
    <property type="expression patterns" value="baseline and differential"/>
</dbReference>
<dbReference type="GO" id="GO:0005634">
    <property type="term" value="C:nucleus"/>
    <property type="evidence" value="ECO:0007669"/>
    <property type="project" value="UniProtKB-SubCell"/>
</dbReference>
<dbReference type="GO" id="GO:0000981">
    <property type="term" value="F:DNA-binding transcription factor activity, RNA polymerase II-specific"/>
    <property type="evidence" value="ECO:0000318"/>
    <property type="project" value="GO_Central"/>
</dbReference>
<dbReference type="GO" id="GO:0000978">
    <property type="term" value="F:RNA polymerase II cis-regulatory region sequence-specific DNA binding"/>
    <property type="evidence" value="ECO:0000318"/>
    <property type="project" value="GO_Central"/>
</dbReference>
<dbReference type="GO" id="GO:0008270">
    <property type="term" value="F:zinc ion binding"/>
    <property type="evidence" value="ECO:0007669"/>
    <property type="project" value="UniProtKB-KW"/>
</dbReference>
<dbReference type="GO" id="GO:0006357">
    <property type="term" value="P:regulation of transcription by RNA polymerase II"/>
    <property type="evidence" value="ECO:0000318"/>
    <property type="project" value="GO_Central"/>
</dbReference>
<dbReference type="FunFam" id="3.30.160.60:FF:004137">
    <property type="match status" value="2"/>
</dbReference>
<dbReference type="FunFam" id="3.30.160.60:FF:002402">
    <property type="entry name" value="Zinc finger protein 347"/>
    <property type="match status" value="2"/>
</dbReference>
<dbReference type="FunFam" id="3.30.160.60:FF:000016">
    <property type="entry name" value="zinc finger protein 37 homolog"/>
    <property type="match status" value="4"/>
</dbReference>
<dbReference type="FunFam" id="3.30.160.60:FF:002090">
    <property type="entry name" value="Zinc finger protein 473"/>
    <property type="match status" value="4"/>
</dbReference>
<dbReference type="FunFam" id="3.30.160.60:FF:001462">
    <property type="entry name" value="Zinc finger protein 502, isoform CRA_a"/>
    <property type="match status" value="1"/>
</dbReference>
<dbReference type="FunFam" id="3.30.160.60:FF:003580">
    <property type="entry name" value="Zinc finger protein 813"/>
    <property type="match status" value="1"/>
</dbReference>
<dbReference type="FunFam" id="3.30.160.60:FF:000394">
    <property type="entry name" value="Zinc finger protein 836"/>
    <property type="match status" value="1"/>
</dbReference>
<dbReference type="FunFam" id="3.30.160.60:FF:000416">
    <property type="entry name" value="zinc finger protein 879 isoform X1"/>
    <property type="match status" value="1"/>
</dbReference>
<dbReference type="Gene3D" id="3.30.160.60">
    <property type="entry name" value="Classic Zinc Finger"/>
    <property type="match status" value="15"/>
</dbReference>
<dbReference type="InterPro" id="IPR036236">
    <property type="entry name" value="Znf_C2H2_sf"/>
</dbReference>
<dbReference type="InterPro" id="IPR013087">
    <property type="entry name" value="Znf_C2H2_type"/>
</dbReference>
<dbReference type="PANTHER" id="PTHR24399:SF71">
    <property type="entry name" value="NOVEL KRAB BOX AND ZINC FINGER, C2H2 TYPE DOMAIN CONTAINING PROTEIN-RELATED"/>
    <property type="match status" value="1"/>
</dbReference>
<dbReference type="PANTHER" id="PTHR24399">
    <property type="entry name" value="ZINC FINGER AND BTB DOMAIN-CONTAINING"/>
    <property type="match status" value="1"/>
</dbReference>
<dbReference type="Pfam" id="PF00096">
    <property type="entry name" value="zf-C2H2"/>
    <property type="match status" value="14"/>
</dbReference>
<dbReference type="SMART" id="SM00355">
    <property type="entry name" value="ZnF_C2H2"/>
    <property type="match status" value="15"/>
</dbReference>
<dbReference type="SUPFAM" id="SSF57667">
    <property type="entry name" value="beta-beta-alpha zinc fingers"/>
    <property type="match status" value="8"/>
</dbReference>
<dbReference type="PROSITE" id="PS00028">
    <property type="entry name" value="ZINC_FINGER_C2H2_1"/>
    <property type="match status" value="14"/>
</dbReference>
<dbReference type="PROSITE" id="PS50157">
    <property type="entry name" value="ZINC_FINGER_C2H2_2"/>
    <property type="match status" value="15"/>
</dbReference>
<proteinExistence type="evidence at protein level"/>